<comment type="function">
    <text evidence="1">May help in the organization of the PsaE and PsaF subunits.</text>
</comment>
<comment type="subcellular location">
    <subcellularLocation>
        <location evidence="1">Plastid</location>
        <location evidence="1">Chloroplast thylakoid membrane</location>
        <topology evidence="1">Single-pass membrane protein</topology>
    </subcellularLocation>
</comment>
<comment type="similarity">
    <text evidence="1">Belongs to the PsaJ family.</text>
</comment>
<accession>P41613</accession>
<proteinExistence type="inferred from homology"/>
<gene>
    <name evidence="1" type="primary">psaJ</name>
</gene>
<geneLocation type="chloroplast"/>
<organism>
    <name type="scientific">Pinus thunbergii</name>
    <name type="common">Japanese black pine</name>
    <name type="synonym">Pinus thunbergiana</name>
    <dbReference type="NCBI Taxonomy" id="3350"/>
    <lineage>
        <taxon>Eukaryota</taxon>
        <taxon>Viridiplantae</taxon>
        <taxon>Streptophyta</taxon>
        <taxon>Embryophyta</taxon>
        <taxon>Tracheophyta</taxon>
        <taxon>Spermatophyta</taxon>
        <taxon>Pinopsida</taxon>
        <taxon>Pinidae</taxon>
        <taxon>Conifers I</taxon>
        <taxon>Pinales</taxon>
        <taxon>Pinaceae</taxon>
        <taxon>Pinus</taxon>
        <taxon>Pinus subgen. Pinus</taxon>
    </lineage>
</organism>
<dbReference type="EMBL" id="D17510">
    <property type="protein sequence ID" value="BAA21334.1"/>
    <property type="molecule type" value="Genomic_DNA"/>
</dbReference>
<dbReference type="PIR" id="T07468">
    <property type="entry name" value="T07468"/>
</dbReference>
<dbReference type="RefSeq" id="NP_042389.1">
    <property type="nucleotide sequence ID" value="NC_001631.1"/>
</dbReference>
<dbReference type="SMR" id="P41613"/>
<dbReference type="GeneID" id="809006"/>
<dbReference type="GO" id="GO:0009535">
    <property type="term" value="C:chloroplast thylakoid membrane"/>
    <property type="evidence" value="ECO:0007669"/>
    <property type="project" value="UniProtKB-SubCell"/>
</dbReference>
<dbReference type="GO" id="GO:0009522">
    <property type="term" value="C:photosystem I"/>
    <property type="evidence" value="ECO:0007669"/>
    <property type="project" value="UniProtKB-KW"/>
</dbReference>
<dbReference type="GO" id="GO:0015979">
    <property type="term" value="P:photosynthesis"/>
    <property type="evidence" value="ECO:0007669"/>
    <property type="project" value="UniProtKB-UniRule"/>
</dbReference>
<dbReference type="Gene3D" id="1.20.5.510">
    <property type="entry name" value="Single helix bin"/>
    <property type="match status" value="1"/>
</dbReference>
<dbReference type="HAMAP" id="MF_00522">
    <property type="entry name" value="PSI_PsaJ"/>
    <property type="match status" value="1"/>
</dbReference>
<dbReference type="InterPro" id="IPR002615">
    <property type="entry name" value="PSI_PsaJ"/>
</dbReference>
<dbReference type="InterPro" id="IPR036062">
    <property type="entry name" value="PSI_PsaJ_sf"/>
</dbReference>
<dbReference type="PANTHER" id="PTHR36082">
    <property type="match status" value="1"/>
</dbReference>
<dbReference type="PANTHER" id="PTHR36082:SF2">
    <property type="entry name" value="PHOTOSYSTEM I REACTION CENTER SUBUNIT IX"/>
    <property type="match status" value="1"/>
</dbReference>
<dbReference type="Pfam" id="PF01701">
    <property type="entry name" value="PSI_PsaJ"/>
    <property type="match status" value="1"/>
</dbReference>
<dbReference type="SUPFAM" id="SSF81544">
    <property type="entry name" value="Subunit IX of photosystem I reaction centre, PsaJ"/>
    <property type="match status" value="1"/>
</dbReference>
<feature type="chain" id="PRO_0000207811" description="Photosystem I reaction center subunit IX">
    <location>
        <begin position="1"/>
        <end position="44"/>
    </location>
</feature>
<feature type="transmembrane region" description="Helical" evidence="1">
    <location>
        <begin position="7"/>
        <end position="27"/>
    </location>
</feature>
<reference key="1">
    <citation type="journal article" date="1994" name="Proc. Natl. Acad. Sci. U.S.A.">
        <title>Loss of all ndh genes as determined by sequencing the entire chloroplast genome of the black pine Pinus thunbergii.</title>
        <authorList>
            <person name="Wakasugi T."/>
            <person name="Tsudzuki J."/>
            <person name="Ito S."/>
            <person name="Nakashima K."/>
            <person name="Tsudzuki T."/>
            <person name="Sugiura M."/>
        </authorList>
    </citation>
    <scope>NUCLEOTIDE SEQUENCE [LARGE SCALE GENOMIC DNA]</scope>
</reference>
<protein>
    <recommendedName>
        <fullName evidence="1">Photosystem I reaction center subunit IX</fullName>
    </recommendedName>
    <alternativeName>
        <fullName evidence="1">PSI-J</fullName>
    </alternativeName>
</protein>
<sequence>MQDLKTYLSTAPVLAILCVSFLAALLIEINRFFPDALFLSLSFS</sequence>
<evidence type="ECO:0000255" key="1">
    <source>
        <dbReference type="HAMAP-Rule" id="MF_00522"/>
    </source>
</evidence>
<keyword id="KW-0150">Chloroplast</keyword>
<keyword id="KW-0472">Membrane</keyword>
<keyword id="KW-0602">Photosynthesis</keyword>
<keyword id="KW-0603">Photosystem I</keyword>
<keyword id="KW-0934">Plastid</keyword>
<keyword id="KW-0793">Thylakoid</keyword>
<keyword id="KW-0812">Transmembrane</keyword>
<keyword id="KW-1133">Transmembrane helix</keyword>
<name>PSAJ_PINTH</name>